<comment type="function">
    <text evidence="2">GTP hydrolase that promotes the GTP-dependent binding of aminoacyl-tRNA to the A-site of ribosomes during protein biosynthesis.</text>
</comment>
<comment type="catalytic activity">
    <reaction evidence="2">
        <text>GTP + H2O = GDP + phosphate + H(+)</text>
        <dbReference type="Rhea" id="RHEA:19669"/>
        <dbReference type="ChEBI" id="CHEBI:15377"/>
        <dbReference type="ChEBI" id="CHEBI:15378"/>
        <dbReference type="ChEBI" id="CHEBI:37565"/>
        <dbReference type="ChEBI" id="CHEBI:43474"/>
        <dbReference type="ChEBI" id="CHEBI:58189"/>
        <dbReference type="EC" id="3.6.5.3"/>
    </reaction>
    <physiologicalReaction direction="left-to-right" evidence="2">
        <dbReference type="Rhea" id="RHEA:19670"/>
    </physiologicalReaction>
</comment>
<comment type="subcellular location">
    <subcellularLocation>
        <location>Plastid</location>
        <location>Chloroplast</location>
    </subcellularLocation>
</comment>
<comment type="similarity">
    <text evidence="3">Belongs to the TRAFAC class translation factor GTPase superfamily. Classic translation factor GTPase family. EF-Tu/EF-1A subfamily.</text>
</comment>
<accession>P49462</accession>
<proteinExistence type="inferred from homology"/>
<organism>
    <name type="scientific">Trieres chinensis</name>
    <name type="common">Marine centric diatom</name>
    <name type="synonym">Odontella sinensis</name>
    <dbReference type="NCBI Taxonomy" id="1514140"/>
    <lineage>
        <taxon>Eukaryota</taxon>
        <taxon>Sar</taxon>
        <taxon>Stramenopiles</taxon>
        <taxon>Ochrophyta</taxon>
        <taxon>Bacillariophyta</taxon>
        <taxon>Mediophyceae</taxon>
        <taxon>Biddulphiophycidae</taxon>
        <taxon>Eupodiscales</taxon>
        <taxon>Parodontellaceae</taxon>
        <taxon>Trieres</taxon>
    </lineage>
</organism>
<protein>
    <recommendedName>
        <fullName>Elongation factor Tu, chloroplastic</fullName>
        <shortName>EF-Tu</shortName>
        <ecNumber evidence="2">3.6.5.3</ecNumber>
    </recommendedName>
</protein>
<geneLocation type="chloroplast"/>
<dbReference type="EC" id="3.6.5.3" evidence="2"/>
<dbReference type="EMBL" id="Z67753">
    <property type="protein sequence ID" value="CAA91621.1"/>
    <property type="molecule type" value="Genomic_DNA"/>
</dbReference>
<dbReference type="PIR" id="S78248">
    <property type="entry name" value="S78248"/>
</dbReference>
<dbReference type="RefSeq" id="NP_043589.1">
    <property type="nucleotide sequence ID" value="NC_001713.1"/>
</dbReference>
<dbReference type="SMR" id="P49462"/>
<dbReference type="GeneID" id="801769"/>
<dbReference type="GO" id="GO:0009507">
    <property type="term" value="C:chloroplast"/>
    <property type="evidence" value="ECO:0007669"/>
    <property type="project" value="UniProtKB-SubCell"/>
</dbReference>
<dbReference type="GO" id="GO:0005829">
    <property type="term" value="C:cytosol"/>
    <property type="evidence" value="ECO:0007669"/>
    <property type="project" value="TreeGrafter"/>
</dbReference>
<dbReference type="GO" id="GO:0005525">
    <property type="term" value="F:GTP binding"/>
    <property type="evidence" value="ECO:0007669"/>
    <property type="project" value="UniProtKB-UniRule"/>
</dbReference>
<dbReference type="GO" id="GO:0003924">
    <property type="term" value="F:GTPase activity"/>
    <property type="evidence" value="ECO:0007669"/>
    <property type="project" value="InterPro"/>
</dbReference>
<dbReference type="GO" id="GO:0003746">
    <property type="term" value="F:translation elongation factor activity"/>
    <property type="evidence" value="ECO:0007669"/>
    <property type="project" value="UniProtKB-UniRule"/>
</dbReference>
<dbReference type="CDD" id="cd03697">
    <property type="entry name" value="EFTU_II"/>
    <property type="match status" value="1"/>
</dbReference>
<dbReference type="CDD" id="cd03707">
    <property type="entry name" value="EFTU_III"/>
    <property type="match status" value="1"/>
</dbReference>
<dbReference type="FunFam" id="2.40.30.10:FF:000001">
    <property type="entry name" value="Elongation factor Tu"/>
    <property type="match status" value="1"/>
</dbReference>
<dbReference type="FunFam" id="2.40.30.10:FF:000046">
    <property type="entry name" value="Elongation factor Tu"/>
    <property type="match status" value="1"/>
</dbReference>
<dbReference type="FunFam" id="3.40.50.300:FF:000003">
    <property type="entry name" value="Elongation factor Tu"/>
    <property type="match status" value="1"/>
</dbReference>
<dbReference type="Gene3D" id="3.40.50.300">
    <property type="entry name" value="P-loop containing nucleotide triphosphate hydrolases"/>
    <property type="match status" value="1"/>
</dbReference>
<dbReference type="Gene3D" id="2.40.30.10">
    <property type="entry name" value="Translation factors"/>
    <property type="match status" value="2"/>
</dbReference>
<dbReference type="HAMAP" id="MF_00118_B">
    <property type="entry name" value="EF_Tu_B"/>
    <property type="match status" value="1"/>
</dbReference>
<dbReference type="InterPro" id="IPR050055">
    <property type="entry name" value="EF-Tu_GTPase"/>
</dbReference>
<dbReference type="InterPro" id="IPR004161">
    <property type="entry name" value="EFTu-like_2"/>
</dbReference>
<dbReference type="InterPro" id="IPR033720">
    <property type="entry name" value="EFTU_2"/>
</dbReference>
<dbReference type="InterPro" id="IPR031157">
    <property type="entry name" value="G_TR_CS"/>
</dbReference>
<dbReference type="InterPro" id="IPR027417">
    <property type="entry name" value="P-loop_NTPase"/>
</dbReference>
<dbReference type="InterPro" id="IPR005225">
    <property type="entry name" value="Small_GTP-bd"/>
</dbReference>
<dbReference type="InterPro" id="IPR000795">
    <property type="entry name" value="T_Tr_GTP-bd_dom"/>
</dbReference>
<dbReference type="InterPro" id="IPR009000">
    <property type="entry name" value="Transl_B-barrel_sf"/>
</dbReference>
<dbReference type="InterPro" id="IPR009001">
    <property type="entry name" value="Transl_elong_EF1A/Init_IF2_C"/>
</dbReference>
<dbReference type="InterPro" id="IPR004541">
    <property type="entry name" value="Transl_elong_EFTu/EF1A_bac/org"/>
</dbReference>
<dbReference type="InterPro" id="IPR004160">
    <property type="entry name" value="Transl_elong_EFTu/EF1A_C"/>
</dbReference>
<dbReference type="NCBIfam" id="TIGR00485">
    <property type="entry name" value="EF-Tu"/>
    <property type="match status" value="1"/>
</dbReference>
<dbReference type="NCBIfam" id="NF000766">
    <property type="entry name" value="PRK00049.1"/>
    <property type="match status" value="1"/>
</dbReference>
<dbReference type="NCBIfam" id="NF009372">
    <property type="entry name" value="PRK12735.1"/>
    <property type="match status" value="1"/>
</dbReference>
<dbReference type="NCBIfam" id="NF009373">
    <property type="entry name" value="PRK12736.1"/>
    <property type="match status" value="1"/>
</dbReference>
<dbReference type="NCBIfam" id="TIGR00231">
    <property type="entry name" value="small_GTP"/>
    <property type="match status" value="1"/>
</dbReference>
<dbReference type="PANTHER" id="PTHR43721:SF22">
    <property type="entry name" value="ELONGATION FACTOR TU, MITOCHONDRIAL"/>
    <property type="match status" value="1"/>
</dbReference>
<dbReference type="PANTHER" id="PTHR43721">
    <property type="entry name" value="ELONGATION FACTOR TU-RELATED"/>
    <property type="match status" value="1"/>
</dbReference>
<dbReference type="Pfam" id="PF00009">
    <property type="entry name" value="GTP_EFTU"/>
    <property type="match status" value="1"/>
</dbReference>
<dbReference type="Pfam" id="PF03144">
    <property type="entry name" value="GTP_EFTU_D2"/>
    <property type="match status" value="1"/>
</dbReference>
<dbReference type="Pfam" id="PF03143">
    <property type="entry name" value="GTP_EFTU_D3"/>
    <property type="match status" value="1"/>
</dbReference>
<dbReference type="PRINTS" id="PR00315">
    <property type="entry name" value="ELONGATNFCT"/>
</dbReference>
<dbReference type="SUPFAM" id="SSF50465">
    <property type="entry name" value="EF-Tu/eEF-1alpha/eIF2-gamma C-terminal domain"/>
    <property type="match status" value="1"/>
</dbReference>
<dbReference type="SUPFAM" id="SSF52540">
    <property type="entry name" value="P-loop containing nucleoside triphosphate hydrolases"/>
    <property type="match status" value="1"/>
</dbReference>
<dbReference type="SUPFAM" id="SSF50447">
    <property type="entry name" value="Translation proteins"/>
    <property type="match status" value="1"/>
</dbReference>
<dbReference type="PROSITE" id="PS00301">
    <property type="entry name" value="G_TR_1"/>
    <property type="match status" value="1"/>
</dbReference>
<dbReference type="PROSITE" id="PS51722">
    <property type="entry name" value="G_TR_2"/>
    <property type="match status" value="1"/>
</dbReference>
<name>EFTU_TRICV</name>
<keyword id="KW-0150">Chloroplast</keyword>
<keyword id="KW-0251">Elongation factor</keyword>
<keyword id="KW-0342">GTP-binding</keyword>
<keyword id="KW-0378">Hydrolase</keyword>
<keyword id="KW-0460">Magnesium</keyword>
<keyword id="KW-0479">Metal-binding</keyword>
<keyword id="KW-0547">Nucleotide-binding</keyword>
<keyword id="KW-0934">Plastid</keyword>
<keyword id="KW-0648">Protein biosynthesis</keyword>
<evidence type="ECO:0000250" key="1"/>
<evidence type="ECO:0000255" key="2">
    <source>
        <dbReference type="HAMAP-Rule" id="MF_00118"/>
    </source>
</evidence>
<evidence type="ECO:0000305" key="3"/>
<feature type="chain" id="PRO_0000091467" description="Elongation factor Tu, chloroplastic">
    <location>
        <begin position="1"/>
        <end position="409"/>
    </location>
</feature>
<feature type="domain" description="tr-type G">
    <location>
        <begin position="10"/>
        <end position="214"/>
    </location>
</feature>
<feature type="region of interest" description="G1" evidence="1">
    <location>
        <begin position="19"/>
        <end position="26"/>
    </location>
</feature>
<feature type="region of interest" description="G2" evidence="1">
    <location>
        <begin position="60"/>
        <end position="64"/>
    </location>
</feature>
<feature type="region of interest" description="G3" evidence="1">
    <location>
        <begin position="81"/>
        <end position="84"/>
    </location>
</feature>
<feature type="region of interest" description="G4" evidence="1">
    <location>
        <begin position="136"/>
        <end position="139"/>
    </location>
</feature>
<feature type="region of interest" description="G5" evidence="1">
    <location>
        <begin position="174"/>
        <end position="176"/>
    </location>
</feature>
<feature type="binding site" evidence="1">
    <location>
        <begin position="19"/>
        <end position="26"/>
    </location>
    <ligand>
        <name>GTP</name>
        <dbReference type="ChEBI" id="CHEBI:37565"/>
    </ligand>
</feature>
<feature type="binding site" evidence="2">
    <location>
        <position position="26"/>
    </location>
    <ligand>
        <name>Mg(2+)</name>
        <dbReference type="ChEBI" id="CHEBI:18420"/>
    </ligand>
</feature>
<feature type="binding site" evidence="1">
    <location>
        <begin position="81"/>
        <end position="85"/>
    </location>
    <ligand>
        <name>GTP</name>
        <dbReference type="ChEBI" id="CHEBI:37565"/>
    </ligand>
</feature>
<feature type="binding site" evidence="1">
    <location>
        <begin position="136"/>
        <end position="139"/>
    </location>
    <ligand>
        <name>GTP</name>
        <dbReference type="ChEBI" id="CHEBI:37565"/>
    </ligand>
</feature>
<gene>
    <name type="primary">tufA</name>
</gene>
<reference key="1">
    <citation type="journal article" date="1995" name="Plant Mol. Biol. Rep.">
        <title>The chloroplast genome of a chlorophyll a+c-containing alga, Odontella sinensis.</title>
        <authorList>
            <person name="Kowallik K.V."/>
            <person name="Stoebe B."/>
            <person name="Schaffran I."/>
            <person name="Kroth-Pancic P."/>
            <person name="Freier U."/>
        </authorList>
    </citation>
    <scope>NUCLEOTIDE SEQUENCE [LARGE SCALE GENOMIC DNA]</scope>
</reference>
<sequence length="409" mass="44560">MAREKFERTKPHVNIGTIGHVDHGKTTLTAAITATLALDGNAKVKDYPDIDGAPEERARGITINTAHVEYETENGHYAHVDCPGHADYVKNMITGAAQMDGAILVVSAADGPMPQTREHILLSKQVGVPDIVVFLNKEDQVDDAELLELVELEVRELLSAYDFQVMTFRFAPGSALQAIEAISSNPAIKRGDNPWVDKIFALMDAVDEYIPTPERDIEKTFLMAIEDVFSITGRGTVATGRIERGVVKVGDTVEIVGVGDTQTTTITGIEMFQKTLDEGFAGDNVGILLRGVTREDIEAGMVLSEPGTITPHTNFESEVYVLTKDEGGRHTPFFTGYRPQFYVRTTDVTGAITQFTADDGSIVEMVMPGDRIKMTAELIYPVAIEEGMRFAIREGGRTIGAGVVSKIIQ</sequence>